<accession>Q9D8Y1</accession>
<keyword id="KW-0472">Membrane</keyword>
<keyword id="KW-0496">Mitochondrion</keyword>
<keyword id="KW-0999">Mitochondrion inner membrane</keyword>
<keyword id="KW-1185">Reference proteome</keyword>
<keyword id="KW-0812">Transmembrane</keyword>
<keyword id="KW-1133">Transmembrane helix</keyword>
<proteinExistence type="evidence at protein level"/>
<name>T126A_MOUSE</name>
<dbReference type="EMBL" id="AK007559">
    <property type="protein sequence ID" value="BAB25107.1"/>
    <property type="molecule type" value="mRNA"/>
</dbReference>
<dbReference type="EMBL" id="BC023171">
    <property type="protein sequence ID" value="AAH23171.1"/>
    <property type="molecule type" value="mRNA"/>
</dbReference>
<dbReference type="CCDS" id="CCDS21447.1"/>
<dbReference type="RefSeq" id="NP_079736.1">
    <property type="nucleotide sequence ID" value="NM_025460.3"/>
</dbReference>
<dbReference type="BioGRID" id="211344">
    <property type="interactions" value="3"/>
</dbReference>
<dbReference type="FunCoup" id="Q9D8Y1">
    <property type="interactions" value="1500"/>
</dbReference>
<dbReference type="STRING" id="10090.ENSMUSP00000032844"/>
<dbReference type="GlyGen" id="Q9D8Y1">
    <property type="glycosylation" value="1 site, 1 O-linked glycan (1 site)"/>
</dbReference>
<dbReference type="iPTMnet" id="Q9D8Y1"/>
<dbReference type="PhosphoSitePlus" id="Q9D8Y1"/>
<dbReference type="SwissPalm" id="Q9D8Y1"/>
<dbReference type="jPOST" id="Q9D8Y1"/>
<dbReference type="PaxDb" id="10090-ENSMUSP00000032844"/>
<dbReference type="PeptideAtlas" id="Q9D8Y1"/>
<dbReference type="ProteomicsDB" id="253455"/>
<dbReference type="Pumba" id="Q9D8Y1"/>
<dbReference type="TopDownProteomics" id="Q9D8Y1"/>
<dbReference type="Antibodypedia" id="53167">
    <property type="antibodies" value="19 antibodies from 11 providers"/>
</dbReference>
<dbReference type="DNASU" id="66271"/>
<dbReference type="Ensembl" id="ENSMUST00000032844.7">
    <property type="protein sequence ID" value="ENSMUSP00000032844.6"/>
    <property type="gene ID" value="ENSMUSG00000030615.13"/>
</dbReference>
<dbReference type="GeneID" id="66271"/>
<dbReference type="KEGG" id="mmu:66271"/>
<dbReference type="UCSC" id="uc009ihn.1">
    <property type="organism name" value="mouse"/>
</dbReference>
<dbReference type="AGR" id="MGI:1913521"/>
<dbReference type="CTD" id="84233"/>
<dbReference type="MGI" id="MGI:1913521">
    <property type="gene designation" value="Tmem126a"/>
</dbReference>
<dbReference type="VEuPathDB" id="HostDB:ENSMUSG00000030615"/>
<dbReference type="eggNOG" id="ENOG502RYF0">
    <property type="taxonomic scope" value="Eukaryota"/>
</dbReference>
<dbReference type="GeneTree" id="ENSGT00520000055616"/>
<dbReference type="HOGENOM" id="CLU_105475_1_0_1"/>
<dbReference type="InParanoid" id="Q9D8Y1"/>
<dbReference type="OMA" id="GDLHCET"/>
<dbReference type="OrthoDB" id="6234762at2759"/>
<dbReference type="PhylomeDB" id="Q9D8Y1"/>
<dbReference type="TreeFam" id="TF327069"/>
<dbReference type="BioGRID-ORCS" id="66271">
    <property type="hits" value="0 hits in 76 CRISPR screens"/>
</dbReference>
<dbReference type="ChiTaRS" id="Tmem126a">
    <property type="organism name" value="mouse"/>
</dbReference>
<dbReference type="PRO" id="PR:Q9D8Y1"/>
<dbReference type="Proteomes" id="UP000000589">
    <property type="component" value="Chromosome 7"/>
</dbReference>
<dbReference type="RNAct" id="Q9D8Y1">
    <property type="molecule type" value="protein"/>
</dbReference>
<dbReference type="Bgee" id="ENSMUSG00000030615">
    <property type="expression patterns" value="Expressed in intercostal muscle and 265 other cell types or tissues"/>
</dbReference>
<dbReference type="ExpressionAtlas" id="Q9D8Y1">
    <property type="expression patterns" value="baseline and differential"/>
</dbReference>
<dbReference type="GO" id="GO:0005743">
    <property type="term" value="C:mitochondrial inner membrane"/>
    <property type="evidence" value="ECO:0000250"/>
    <property type="project" value="UniProtKB"/>
</dbReference>
<dbReference type="GO" id="GO:0005739">
    <property type="term" value="C:mitochondrion"/>
    <property type="evidence" value="ECO:0007005"/>
    <property type="project" value="MGI"/>
</dbReference>
<dbReference type="GO" id="GO:0005886">
    <property type="term" value="C:plasma membrane"/>
    <property type="evidence" value="ECO:0000314"/>
    <property type="project" value="MGI"/>
</dbReference>
<dbReference type="GO" id="GO:0141164">
    <property type="term" value="P:mitochondrial protein quality control"/>
    <property type="evidence" value="ECO:0000250"/>
    <property type="project" value="UniProtKB"/>
</dbReference>
<dbReference type="GO" id="GO:0032981">
    <property type="term" value="P:mitochondrial respiratory chain complex I assembly"/>
    <property type="evidence" value="ECO:0000250"/>
    <property type="project" value="UniProtKB"/>
</dbReference>
<dbReference type="GO" id="GO:0021554">
    <property type="term" value="P:optic nerve development"/>
    <property type="evidence" value="ECO:0007669"/>
    <property type="project" value="Ensembl"/>
</dbReference>
<dbReference type="GO" id="GO:0032979">
    <property type="term" value="P:protein insertion into mitochondrial inner membrane from matrix"/>
    <property type="evidence" value="ECO:0000250"/>
    <property type="project" value="UniProtKB"/>
</dbReference>
<dbReference type="GO" id="GO:0034142">
    <property type="term" value="P:toll-like receptor 4 signaling pathway"/>
    <property type="evidence" value="ECO:0000315"/>
    <property type="project" value="MGI"/>
</dbReference>
<dbReference type="InterPro" id="IPR009801">
    <property type="entry name" value="TMEM126"/>
</dbReference>
<dbReference type="PANTHER" id="PTHR16296:SF4">
    <property type="entry name" value="TRANSMEMBRANE PROTEIN 126A"/>
    <property type="match status" value="1"/>
</dbReference>
<dbReference type="PANTHER" id="PTHR16296">
    <property type="entry name" value="UNCHARACTERIZED HYPOTHALAMUS PROTEIN HT007"/>
    <property type="match status" value="1"/>
</dbReference>
<dbReference type="Pfam" id="PF07114">
    <property type="entry name" value="TMEM126"/>
    <property type="match status" value="1"/>
</dbReference>
<sequence length="196" mass="21539">MESHKPSTSKDDLILNIISRKIKQLPESDRNLLEYGSAYIGLNAAFGGLIANSLFRRILNVTQARLASSLPMAVIPFLTANLSYQSLVSLPLSTGDLNCETCTTTRGALVGLVMGGLYPILLAIPVNGGLAARYESSPLPQRGNIFNYWITVSKPVFRKMLFPTLLQTVFASYLGSRQYKLLIKALQLPEPDLEIH</sequence>
<protein>
    <recommendedName>
        <fullName evidence="5">Transmembrane protein 126A</fullName>
    </recommendedName>
</protein>
<reference key="1">
    <citation type="journal article" date="2005" name="Science">
        <title>The transcriptional landscape of the mammalian genome.</title>
        <authorList>
            <person name="Carninci P."/>
            <person name="Kasukawa T."/>
            <person name="Katayama S."/>
            <person name="Gough J."/>
            <person name="Frith M.C."/>
            <person name="Maeda N."/>
            <person name="Oyama R."/>
            <person name="Ravasi T."/>
            <person name="Lenhard B."/>
            <person name="Wells C."/>
            <person name="Kodzius R."/>
            <person name="Shimokawa K."/>
            <person name="Bajic V.B."/>
            <person name="Brenner S.E."/>
            <person name="Batalov S."/>
            <person name="Forrest A.R."/>
            <person name="Zavolan M."/>
            <person name="Davis M.J."/>
            <person name="Wilming L.G."/>
            <person name="Aidinis V."/>
            <person name="Allen J.E."/>
            <person name="Ambesi-Impiombato A."/>
            <person name="Apweiler R."/>
            <person name="Aturaliya R.N."/>
            <person name="Bailey T.L."/>
            <person name="Bansal M."/>
            <person name="Baxter L."/>
            <person name="Beisel K.W."/>
            <person name="Bersano T."/>
            <person name="Bono H."/>
            <person name="Chalk A.M."/>
            <person name="Chiu K.P."/>
            <person name="Choudhary V."/>
            <person name="Christoffels A."/>
            <person name="Clutterbuck D.R."/>
            <person name="Crowe M.L."/>
            <person name="Dalla E."/>
            <person name="Dalrymple B.P."/>
            <person name="de Bono B."/>
            <person name="Della Gatta G."/>
            <person name="di Bernardo D."/>
            <person name="Down T."/>
            <person name="Engstrom P."/>
            <person name="Fagiolini M."/>
            <person name="Faulkner G."/>
            <person name="Fletcher C.F."/>
            <person name="Fukushima T."/>
            <person name="Furuno M."/>
            <person name="Futaki S."/>
            <person name="Gariboldi M."/>
            <person name="Georgii-Hemming P."/>
            <person name="Gingeras T.R."/>
            <person name="Gojobori T."/>
            <person name="Green R.E."/>
            <person name="Gustincich S."/>
            <person name="Harbers M."/>
            <person name="Hayashi Y."/>
            <person name="Hensch T.K."/>
            <person name="Hirokawa N."/>
            <person name="Hill D."/>
            <person name="Huminiecki L."/>
            <person name="Iacono M."/>
            <person name="Ikeo K."/>
            <person name="Iwama A."/>
            <person name="Ishikawa T."/>
            <person name="Jakt M."/>
            <person name="Kanapin A."/>
            <person name="Katoh M."/>
            <person name="Kawasawa Y."/>
            <person name="Kelso J."/>
            <person name="Kitamura H."/>
            <person name="Kitano H."/>
            <person name="Kollias G."/>
            <person name="Krishnan S.P."/>
            <person name="Kruger A."/>
            <person name="Kummerfeld S.K."/>
            <person name="Kurochkin I.V."/>
            <person name="Lareau L.F."/>
            <person name="Lazarevic D."/>
            <person name="Lipovich L."/>
            <person name="Liu J."/>
            <person name="Liuni S."/>
            <person name="McWilliam S."/>
            <person name="Madan Babu M."/>
            <person name="Madera M."/>
            <person name="Marchionni L."/>
            <person name="Matsuda H."/>
            <person name="Matsuzawa S."/>
            <person name="Miki H."/>
            <person name="Mignone F."/>
            <person name="Miyake S."/>
            <person name="Morris K."/>
            <person name="Mottagui-Tabar S."/>
            <person name="Mulder N."/>
            <person name="Nakano N."/>
            <person name="Nakauchi H."/>
            <person name="Ng P."/>
            <person name="Nilsson R."/>
            <person name="Nishiguchi S."/>
            <person name="Nishikawa S."/>
            <person name="Nori F."/>
            <person name="Ohara O."/>
            <person name="Okazaki Y."/>
            <person name="Orlando V."/>
            <person name="Pang K.C."/>
            <person name="Pavan W.J."/>
            <person name="Pavesi G."/>
            <person name="Pesole G."/>
            <person name="Petrovsky N."/>
            <person name="Piazza S."/>
            <person name="Reed J."/>
            <person name="Reid J.F."/>
            <person name="Ring B.Z."/>
            <person name="Ringwald M."/>
            <person name="Rost B."/>
            <person name="Ruan Y."/>
            <person name="Salzberg S.L."/>
            <person name="Sandelin A."/>
            <person name="Schneider C."/>
            <person name="Schoenbach C."/>
            <person name="Sekiguchi K."/>
            <person name="Semple C.A."/>
            <person name="Seno S."/>
            <person name="Sessa L."/>
            <person name="Sheng Y."/>
            <person name="Shibata Y."/>
            <person name="Shimada H."/>
            <person name="Shimada K."/>
            <person name="Silva D."/>
            <person name="Sinclair B."/>
            <person name="Sperling S."/>
            <person name="Stupka E."/>
            <person name="Sugiura K."/>
            <person name="Sultana R."/>
            <person name="Takenaka Y."/>
            <person name="Taki K."/>
            <person name="Tammoja K."/>
            <person name="Tan S.L."/>
            <person name="Tang S."/>
            <person name="Taylor M.S."/>
            <person name="Tegner J."/>
            <person name="Teichmann S.A."/>
            <person name="Ueda H.R."/>
            <person name="van Nimwegen E."/>
            <person name="Verardo R."/>
            <person name="Wei C.L."/>
            <person name="Yagi K."/>
            <person name="Yamanishi H."/>
            <person name="Zabarovsky E."/>
            <person name="Zhu S."/>
            <person name="Zimmer A."/>
            <person name="Hide W."/>
            <person name="Bult C."/>
            <person name="Grimmond S.M."/>
            <person name="Teasdale R.D."/>
            <person name="Liu E.T."/>
            <person name="Brusic V."/>
            <person name="Quackenbush J."/>
            <person name="Wahlestedt C."/>
            <person name="Mattick J.S."/>
            <person name="Hume D.A."/>
            <person name="Kai C."/>
            <person name="Sasaki D."/>
            <person name="Tomaru Y."/>
            <person name="Fukuda S."/>
            <person name="Kanamori-Katayama M."/>
            <person name="Suzuki M."/>
            <person name="Aoki J."/>
            <person name="Arakawa T."/>
            <person name="Iida J."/>
            <person name="Imamura K."/>
            <person name="Itoh M."/>
            <person name="Kato T."/>
            <person name="Kawaji H."/>
            <person name="Kawagashira N."/>
            <person name="Kawashima T."/>
            <person name="Kojima M."/>
            <person name="Kondo S."/>
            <person name="Konno H."/>
            <person name="Nakano K."/>
            <person name="Ninomiya N."/>
            <person name="Nishio T."/>
            <person name="Okada M."/>
            <person name="Plessy C."/>
            <person name="Shibata K."/>
            <person name="Shiraki T."/>
            <person name="Suzuki S."/>
            <person name="Tagami M."/>
            <person name="Waki K."/>
            <person name="Watahiki A."/>
            <person name="Okamura-Oho Y."/>
            <person name="Suzuki H."/>
            <person name="Kawai J."/>
            <person name="Hayashizaki Y."/>
        </authorList>
    </citation>
    <scope>NUCLEOTIDE SEQUENCE [LARGE SCALE MRNA]</scope>
    <source>
        <strain>C57BL/6J</strain>
        <tissue>Pancreas</tissue>
    </source>
</reference>
<reference key="2">
    <citation type="journal article" date="2004" name="Genome Res.">
        <title>The status, quality, and expansion of the NIH full-length cDNA project: the Mammalian Gene Collection (MGC).</title>
        <authorList>
            <consortium name="The MGC Project Team"/>
        </authorList>
    </citation>
    <scope>NUCLEOTIDE SEQUENCE [LARGE SCALE MRNA]</scope>
    <source>
        <strain>FVB/N</strain>
        <tissue>Mammary tumor</tissue>
    </source>
</reference>
<reference key="3">
    <citation type="journal article" date="2009" name="Am. J. Hum. Genet.">
        <title>TMEM126A, encoding a mitochondrial protein, is mutated in autosomal-recessive nonsyndromic optic atrophy.</title>
        <authorList>
            <person name="Hanein S."/>
            <person name="Perrault I."/>
            <person name="Roche O."/>
            <person name="Gerber S."/>
            <person name="Khadom N."/>
            <person name="Rio M."/>
            <person name="Boddaert N."/>
            <person name="Jean-Pierre M."/>
            <person name="Brahimi N."/>
            <person name="Serre V."/>
            <person name="Chretien D."/>
            <person name="Delphin N."/>
            <person name="Fares-Taie L."/>
            <person name="Lachheb S."/>
            <person name="Rotig A."/>
            <person name="Meire F."/>
            <person name="Munnich A."/>
            <person name="Dufier J.L."/>
            <person name="Kaplan J."/>
            <person name="Rozet J.M."/>
        </authorList>
    </citation>
    <scope>TISSUE SPECIFICITY</scope>
</reference>
<reference key="4">
    <citation type="journal article" date="2010" name="Cell">
        <title>A tissue-specific atlas of mouse protein phosphorylation and expression.</title>
        <authorList>
            <person name="Huttlin E.L."/>
            <person name="Jedrychowski M.P."/>
            <person name="Elias J.E."/>
            <person name="Goswami T."/>
            <person name="Rad R."/>
            <person name="Beausoleil S.A."/>
            <person name="Villen J."/>
            <person name="Haas W."/>
            <person name="Sowa M.E."/>
            <person name="Gygi S.P."/>
        </authorList>
    </citation>
    <scope>IDENTIFICATION BY MASS SPECTROMETRY [LARGE SCALE ANALYSIS]</scope>
    <source>
        <tissue>Brown adipose tissue</tissue>
        <tissue>Kidney</tissue>
        <tissue>Liver</tissue>
        <tissue>Pancreas</tissue>
    </source>
</reference>
<feature type="chain" id="PRO_0000271000" description="Transmembrane protein 126A">
    <location>
        <begin position="1"/>
        <end position="196"/>
    </location>
</feature>
<feature type="topological domain" description="Mitochondrial matrix" evidence="2">
    <location>
        <begin position="1"/>
        <end position="34"/>
    </location>
</feature>
<feature type="transmembrane region" description="Helical" evidence="2">
    <location>
        <begin position="35"/>
        <end position="55"/>
    </location>
</feature>
<feature type="topological domain" description="Mitochondrial intermembrane" evidence="2">
    <location>
        <begin position="56"/>
        <end position="57"/>
    </location>
</feature>
<feature type="transmembrane region" description="Helical" evidence="2">
    <location>
        <begin position="58"/>
        <end position="78"/>
    </location>
</feature>
<feature type="topological domain" description="Mitochondrial matrix" evidence="2">
    <location>
        <begin position="79"/>
        <end position="106"/>
    </location>
</feature>
<feature type="transmembrane region" description="Helical" evidence="2">
    <location>
        <begin position="107"/>
        <end position="127"/>
    </location>
</feature>
<feature type="topological domain" description="Mitochondrial intermembrane" evidence="2">
    <location>
        <begin position="128"/>
        <end position="159"/>
    </location>
</feature>
<feature type="transmembrane region" description="Helical" evidence="2">
    <location>
        <begin position="160"/>
        <end position="176"/>
    </location>
</feature>
<feature type="topological domain" description="Mitochondrial matrix" evidence="2">
    <location>
        <begin position="177"/>
        <end position="196"/>
    </location>
</feature>
<comment type="function">
    <text evidence="1">Protein required for the cotranslational protein quality control in the inner membrane of the mitochondria. Associates with newly synthesized polypeptides and may act as a chaperone that cooperates with OXA1L for the insertion of newly synthesized mitochondrial proteins into the inner membrane. Required for the assembly of the ND4 module of mitochondrial complex I.</text>
</comment>
<comment type="subunit">
    <text evidence="1">Interacts with OXA1L; promoting cotranslational quality control in mitochondria.</text>
</comment>
<comment type="subcellular location">
    <subcellularLocation>
        <location evidence="1">Mitochondrion inner membrane</location>
        <topology evidence="1">Multi-pass membrane protein</topology>
    </subcellularLocation>
</comment>
<comment type="tissue specificity">
    <text evidence="3">In the retina, significant levels of expression are detected in the ganglion cell layer, the optic nerve head, the outer plexiform layer, and in the outer ellipsoide length of photoreceptor inner segments.</text>
</comment>
<comment type="similarity">
    <text evidence="5">Belongs to the TMEM126 family.</text>
</comment>
<evidence type="ECO:0000250" key="1">
    <source>
        <dbReference type="UniProtKB" id="Q9H061"/>
    </source>
</evidence>
<evidence type="ECO:0000255" key="2"/>
<evidence type="ECO:0000269" key="3">
    <source>
    </source>
</evidence>
<evidence type="ECO:0000303" key="4">
    <source>
    </source>
</evidence>
<evidence type="ECO:0000305" key="5"/>
<evidence type="ECO:0000312" key="6">
    <source>
        <dbReference type="MGI" id="MGI:1913521"/>
    </source>
</evidence>
<gene>
    <name evidence="4 6" type="primary">Tmem126a</name>
</gene>
<organism>
    <name type="scientific">Mus musculus</name>
    <name type="common">Mouse</name>
    <dbReference type="NCBI Taxonomy" id="10090"/>
    <lineage>
        <taxon>Eukaryota</taxon>
        <taxon>Metazoa</taxon>
        <taxon>Chordata</taxon>
        <taxon>Craniata</taxon>
        <taxon>Vertebrata</taxon>
        <taxon>Euteleostomi</taxon>
        <taxon>Mammalia</taxon>
        <taxon>Eutheria</taxon>
        <taxon>Euarchontoglires</taxon>
        <taxon>Glires</taxon>
        <taxon>Rodentia</taxon>
        <taxon>Myomorpha</taxon>
        <taxon>Muroidea</taxon>
        <taxon>Muridae</taxon>
        <taxon>Murinae</taxon>
        <taxon>Mus</taxon>
        <taxon>Mus</taxon>
    </lineage>
</organism>